<protein>
    <recommendedName>
        <fullName>ATP-dependent RNA helicase dbp2</fullName>
        <ecNumber>3.6.4.13</ecNumber>
    </recommendedName>
</protein>
<evidence type="ECO:0000250" key="1"/>
<evidence type="ECO:0000255" key="2">
    <source>
        <dbReference type="PROSITE-ProRule" id="PRU00541"/>
    </source>
</evidence>
<evidence type="ECO:0000255" key="3">
    <source>
        <dbReference type="PROSITE-ProRule" id="PRU00542"/>
    </source>
</evidence>
<evidence type="ECO:0000256" key="4">
    <source>
        <dbReference type="SAM" id="MobiDB-lite"/>
    </source>
</evidence>
<evidence type="ECO:0000305" key="5"/>
<dbReference type="EC" id="3.6.4.13"/>
<dbReference type="EMBL" id="BA000055">
    <property type="protein sequence ID" value="BAE65045.1"/>
    <property type="molecule type" value="Genomic_DNA"/>
</dbReference>
<dbReference type="SMR" id="Q2U070"/>
<dbReference type="STRING" id="510516.Q2U070"/>
<dbReference type="EnsemblFungi" id="BAE65045">
    <property type="protein sequence ID" value="BAE65045"/>
    <property type="gene ID" value="AO090011000563"/>
</dbReference>
<dbReference type="HOGENOM" id="CLU_003041_16_9_1"/>
<dbReference type="Proteomes" id="UP000006564">
    <property type="component" value="Chromosome 7"/>
</dbReference>
<dbReference type="GO" id="GO:0005737">
    <property type="term" value="C:cytoplasm"/>
    <property type="evidence" value="ECO:0007669"/>
    <property type="project" value="UniProtKB-SubCell"/>
</dbReference>
<dbReference type="GO" id="GO:0005634">
    <property type="term" value="C:nucleus"/>
    <property type="evidence" value="ECO:0007669"/>
    <property type="project" value="UniProtKB-SubCell"/>
</dbReference>
<dbReference type="GO" id="GO:0005524">
    <property type="term" value="F:ATP binding"/>
    <property type="evidence" value="ECO:0007669"/>
    <property type="project" value="UniProtKB-KW"/>
</dbReference>
<dbReference type="GO" id="GO:0016887">
    <property type="term" value="F:ATP hydrolysis activity"/>
    <property type="evidence" value="ECO:0007669"/>
    <property type="project" value="RHEA"/>
</dbReference>
<dbReference type="GO" id="GO:0003723">
    <property type="term" value="F:RNA binding"/>
    <property type="evidence" value="ECO:0007669"/>
    <property type="project" value="UniProtKB-KW"/>
</dbReference>
<dbReference type="GO" id="GO:0003724">
    <property type="term" value="F:RNA helicase activity"/>
    <property type="evidence" value="ECO:0007669"/>
    <property type="project" value="UniProtKB-EC"/>
</dbReference>
<dbReference type="GO" id="GO:0000184">
    <property type="term" value="P:nuclear-transcribed mRNA catabolic process, nonsense-mediated decay"/>
    <property type="evidence" value="ECO:0007669"/>
    <property type="project" value="UniProtKB-KW"/>
</dbReference>
<dbReference type="GO" id="GO:0006364">
    <property type="term" value="P:rRNA processing"/>
    <property type="evidence" value="ECO:0007669"/>
    <property type="project" value="UniProtKB-KW"/>
</dbReference>
<dbReference type="CDD" id="cd18787">
    <property type="entry name" value="SF2_C_DEAD"/>
    <property type="match status" value="1"/>
</dbReference>
<dbReference type="FunFam" id="3.40.50.300:FF:000008">
    <property type="entry name" value="ATP-dependent RNA helicase RhlB"/>
    <property type="match status" value="1"/>
</dbReference>
<dbReference type="FunFam" id="3.40.50.300:FF:000079">
    <property type="entry name" value="probable ATP-dependent RNA helicase DDX17"/>
    <property type="match status" value="1"/>
</dbReference>
<dbReference type="Gene3D" id="3.40.50.300">
    <property type="entry name" value="P-loop containing nucleotide triphosphate hydrolases"/>
    <property type="match status" value="2"/>
</dbReference>
<dbReference type="InterPro" id="IPR011545">
    <property type="entry name" value="DEAD/DEAH_box_helicase_dom"/>
</dbReference>
<dbReference type="InterPro" id="IPR014001">
    <property type="entry name" value="Helicase_ATP-bd"/>
</dbReference>
<dbReference type="InterPro" id="IPR001650">
    <property type="entry name" value="Helicase_C-like"/>
</dbReference>
<dbReference type="InterPro" id="IPR027417">
    <property type="entry name" value="P-loop_NTPase"/>
</dbReference>
<dbReference type="InterPro" id="IPR000629">
    <property type="entry name" value="RNA-helicase_DEAD-box_CS"/>
</dbReference>
<dbReference type="InterPro" id="IPR014014">
    <property type="entry name" value="RNA_helicase_DEAD_Q_motif"/>
</dbReference>
<dbReference type="PANTHER" id="PTHR47958">
    <property type="entry name" value="ATP-DEPENDENT RNA HELICASE DBP3"/>
    <property type="match status" value="1"/>
</dbReference>
<dbReference type="Pfam" id="PF00270">
    <property type="entry name" value="DEAD"/>
    <property type="match status" value="1"/>
</dbReference>
<dbReference type="Pfam" id="PF00271">
    <property type="entry name" value="Helicase_C"/>
    <property type="match status" value="1"/>
</dbReference>
<dbReference type="SMART" id="SM00487">
    <property type="entry name" value="DEXDc"/>
    <property type="match status" value="1"/>
</dbReference>
<dbReference type="SMART" id="SM00490">
    <property type="entry name" value="HELICc"/>
    <property type="match status" value="1"/>
</dbReference>
<dbReference type="SUPFAM" id="SSF52540">
    <property type="entry name" value="P-loop containing nucleoside triphosphate hydrolases"/>
    <property type="match status" value="1"/>
</dbReference>
<dbReference type="PROSITE" id="PS00039">
    <property type="entry name" value="DEAD_ATP_HELICASE"/>
    <property type="match status" value="1"/>
</dbReference>
<dbReference type="PROSITE" id="PS51192">
    <property type="entry name" value="HELICASE_ATP_BIND_1"/>
    <property type="match status" value="1"/>
</dbReference>
<dbReference type="PROSITE" id="PS51194">
    <property type="entry name" value="HELICASE_CTER"/>
    <property type="match status" value="1"/>
</dbReference>
<dbReference type="PROSITE" id="PS51195">
    <property type="entry name" value="Q_MOTIF"/>
    <property type="match status" value="1"/>
</dbReference>
<name>DBP2_ASPOR</name>
<gene>
    <name type="primary">dbp2</name>
    <name type="ORF">AO090011000563</name>
</gene>
<reference key="1">
    <citation type="journal article" date="2005" name="Nature">
        <title>Genome sequencing and analysis of Aspergillus oryzae.</title>
        <authorList>
            <person name="Machida M."/>
            <person name="Asai K."/>
            <person name="Sano M."/>
            <person name="Tanaka T."/>
            <person name="Kumagai T."/>
            <person name="Terai G."/>
            <person name="Kusumoto K."/>
            <person name="Arima T."/>
            <person name="Akita O."/>
            <person name="Kashiwagi Y."/>
            <person name="Abe K."/>
            <person name="Gomi K."/>
            <person name="Horiuchi H."/>
            <person name="Kitamoto K."/>
            <person name="Kobayashi T."/>
            <person name="Takeuchi M."/>
            <person name="Denning D.W."/>
            <person name="Galagan J.E."/>
            <person name="Nierman W.C."/>
            <person name="Yu J."/>
            <person name="Archer D.B."/>
            <person name="Bennett J.W."/>
            <person name="Bhatnagar D."/>
            <person name="Cleveland T.E."/>
            <person name="Fedorova N.D."/>
            <person name="Gotoh O."/>
            <person name="Horikawa H."/>
            <person name="Hosoyama A."/>
            <person name="Ichinomiya M."/>
            <person name="Igarashi R."/>
            <person name="Iwashita K."/>
            <person name="Juvvadi P.R."/>
            <person name="Kato M."/>
            <person name="Kato Y."/>
            <person name="Kin T."/>
            <person name="Kokubun A."/>
            <person name="Maeda H."/>
            <person name="Maeyama N."/>
            <person name="Maruyama J."/>
            <person name="Nagasaki H."/>
            <person name="Nakajima T."/>
            <person name="Oda K."/>
            <person name="Okada K."/>
            <person name="Paulsen I."/>
            <person name="Sakamoto K."/>
            <person name="Sawano T."/>
            <person name="Takahashi M."/>
            <person name="Takase K."/>
            <person name="Terabayashi Y."/>
            <person name="Wortman J.R."/>
            <person name="Yamada O."/>
            <person name="Yamagata Y."/>
            <person name="Anazawa H."/>
            <person name="Hata Y."/>
            <person name="Koide Y."/>
            <person name="Komori T."/>
            <person name="Koyama Y."/>
            <person name="Minetoki T."/>
            <person name="Suharnan S."/>
            <person name="Tanaka A."/>
            <person name="Isono K."/>
            <person name="Kuhara S."/>
            <person name="Ogasawara N."/>
            <person name="Kikuchi H."/>
        </authorList>
    </citation>
    <scope>NUCLEOTIDE SEQUENCE [LARGE SCALE GENOMIC DNA]</scope>
    <source>
        <strain>ATCC 42149 / RIB 40</strain>
    </source>
</reference>
<comment type="function">
    <text evidence="1">ATP-dependent RNA helicase involved nonsense-mediated mRNA decay and ribosome biogenesis through rRNA processing.</text>
</comment>
<comment type="catalytic activity">
    <reaction>
        <text>ATP + H2O = ADP + phosphate + H(+)</text>
        <dbReference type="Rhea" id="RHEA:13065"/>
        <dbReference type="ChEBI" id="CHEBI:15377"/>
        <dbReference type="ChEBI" id="CHEBI:15378"/>
        <dbReference type="ChEBI" id="CHEBI:30616"/>
        <dbReference type="ChEBI" id="CHEBI:43474"/>
        <dbReference type="ChEBI" id="CHEBI:456216"/>
        <dbReference type="EC" id="3.6.4.13"/>
    </reaction>
</comment>
<comment type="subunit">
    <text evidence="1">Associates with polysomes.</text>
</comment>
<comment type="subcellular location">
    <subcellularLocation>
        <location evidence="1">Cytoplasm</location>
    </subcellularLocation>
    <subcellularLocation>
        <location evidence="1">Nucleus</location>
    </subcellularLocation>
</comment>
<comment type="domain">
    <text>The Q motif is unique to and characteristic of the DEAD box family of RNA helicases and controls ATP binding and hydrolysis.</text>
</comment>
<comment type="similarity">
    <text evidence="5">Belongs to the DEAD box helicase family. DDX5/DBP2 subfamily.</text>
</comment>
<feature type="chain" id="PRO_0000232165" description="ATP-dependent RNA helicase dbp2">
    <location>
        <begin position="1"/>
        <end position="554"/>
    </location>
</feature>
<feature type="domain" description="Helicase ATP-binding" evidence="2">
    <location>
        <begin position="161"/>
        <end position="336"/>
    </location>
</feature>
<feature type="domain" description="Helicase C-terminal" evidence="3">
    <location>
        <begin position="364"/>
        <end position="511"/>
    </location>
</feature>
<feature type="region of interest" description="Disordered" evidence="4">
    <location>
        <begin position="1"/>
        <end position="41"/>
    </location>
</feature>
<feature type="region of interest" description="RNA-binding RGG-box" evidence="1">
    <location>
        <begin position="513"/>
        <end position="536"/>
    </location>
</feature>
<feature type="region of interest" description="Disordered" evidence="4">
    <location>
        <begin position="521"/>
        <end position="554"/>
    </location>
</feature>
<feature type="short sequence motif" description="Q motif">
    <location>
        <begin position="130"/>
        <end position="158"/>
    </location>
</feature>
<feature type="short sequence motif" description="DEAD box">
    <location>
        <begin position="284"/>
        <end position="287"/>
    </location>
</feature>
<feature type="compositionally biased region" description="Low complexity" evidence="4">
    <location>
        <begin position="25"/>
        <end position="34"/>
    </location>
</feature>
<feature type="compositionally biased region" description="Gly residues" evidence="4">
    <location>
        <begin position="521"/>
        <end position="538"/>
    </location>
</feature>
<feature type="binding site" evidence="2">
    <location>
        <begin position="174"/>
        <end position="181"/>
    </location>
    <ligand>
        <name>ATP</name>
        <dbReference type="ChEBI" id="CHEBI:30616"/>
    </ligand>
</feature>
<organism>
    <name type="scientific">Aspergillus oryzae (strain ATCC 42149 / RIB 40)</name>
    <name type="common">Yellow koji mold</name>
    <dbReference type="NCBI Taxonomy" id="510516"/>
    <lineage>
        <taxon>Eukaryota</taxon>
        <taxon>Fungi</taxon>
        <taxon>Dikarya</taxon>
        <taxon>Ascomycota</taxon>
        <taxon>Pezizomycotina</taxon>
        <taxon>Eurotiomycetes</taxon>
        <taxon>Eurotiomycetidae</taxon>
        <taxon>Eurotiales</taxon>
        <taxon>Aspergillaceae</taxon>
        <taxon>Aspergillus</taxon>
        <taxon>Aspergillus subgen. Circumdati</taxon>
    </lineage>
</organism>
<accession>Q2U070</accession>
<keyword id="KW-0067">ATP-binding</keyword>
<keyword id="KW-0963">Cytoplasm</keyword>
<keyword id="KW-0347">Helicase</keyword>
<keyword id="KW-0378">Hydrolase</keyword>
<keyword id="KW-0866">Nonsense-mediated mRNA decay</keyword>
<keyword id="KW-0547">Nucleotide-binding</keyword>
<keyword id="KW-0539">Nucleus</keyword>
<keyword id="KW-1185">Reference proteome</keyword>
<keyword id="KW-0690">Ribosome biogenesis</keyword>
<keyword id="KW-0694">RNA-binding</keyword>
<keyword id="KW-0698">rRNA processing</keyword>
<sequence>MSYNGGYQRDQRDSYRNGGGGGYSNGYSNGNSNGYSGGGSGGGYGGGYGGGGYGGGYGGRGGGAGGGDRMSNLGAGLKKQEWDLDSLPKFEKSFYKEHPDVANRSQRDVDEFRKKFEMSVQGKNIPRPVETFDEAGFPQYVLSEVKAQGFERPTAIQSQGWPMALSGRDVVGIAETGSGKTLSYCLPAIVHINAQPLLAPGDGPIVLVLAPTRELAVQIQAEITKFGKSSRIRNTCVYGGVPKGPQIRDLSRGVEVCIATPGRLIDMLEAGRTNLRRVTYLVLDEADRMLDMGFEPQIRKIISQIRPDRQTCMWSATWPKEVRQLASDFLNDYIQVNIGSMDLSANHRITQIVEVVSDFEKRDKMIKHLEKIMENRGNKCLIFTGTKRIADEITRFLRQDGWPALSIHGDKQQQERDWVLNEFKTGKSPIMVATDVASRGIDVRDITHVLNYDYPNNSEDYVHRIGRTGRAGAKGTAITFFTTDNSKQARDLVTILTEAKQQIDPRLAEMVRYSGGGGGGRGGYGRWGGRGGGRGRGGNYTASNAAPLGGNRRW</sequence>
<proteinExistence type="inferred from homology"/>